<keyword id="KW-0053">Apoptosis</keyword>
<keyword id="KW-0167">Capsid protein</keyword>
<keyword id="KW-1165">Clathrin-mediated endocytosis of virus by host</keyword>
<keyword id="KW-1170">Fusion of virus membrane with host endosomal membrane</keyword>
<keyword id="KW-1168">Fusion of virus membrane with host membrane</keyword>
<keyword id="KW-0325">Glycoprotein</keyword>
<keyword id="KW-1035">Host cytoplasm</keyword>
<keyword id="KW-1038">Host endoplasmic reticulum</keyword>
<keyword id="KW-1041">Host lipid droplet</keyword>
<keyword id="KW-1043">Host membrane</keyword>
<keyword id="KW-1045">Host mitochondrion</keyword>
<keyword id="KW-1048">Host nucleus</keyword>
<keyword id="KW-0945">Host-virus interaction</keyword>
<keyword id="KW-1090">Inhibition of host innate immune response by virus</keyword>
<keyword id="KW-0922">Interferon antiviral system evasion</keyword>
<keyword id="KW-0472">Membrane</keyword>
<keyword id="KW-0553">Oncogene</keyword>
<keyword id="KW-0687">Ribonucleoprotein</keyword>
<keyword id="KW-0694">RNA-binding</keyword>
<keyword id="KW-0812">Transmembrane</keyword>
<keyword id="KW-1133">Transmembrane helix</keyword>
<keyword id="KW-0832">Ubl conjugation</keyword>
<keyword id="KW-1161">Viral attachment to host cell</keyword>
<keyword id="KW-0261">Viral envelope protein</keyword>
<keyword id="KW-0899">Viral immunoevasion</keyword>
<keyword id="KW-0543">Viral nucleoprotein</keyword>
<keyword id="KW-1162">Viral penetration into host cytoplasm</keyword>
<keyword id="KW-0946">Virion</keyword>
<keyword id="KW-1164">Virus endocytosis by host</keyword>
<keyword id="KW-1160">Virus entry into host cell</keyword>
<evidence type="ECO:0000250" key="1">
    <source>
        <dbReference type="UniProtKB" id="P26662"/>
    </source>
</evidence>
<evidence type="ECO:0000250" key="2">
    <source>
        <dbReference type="UniProtKB" id="P26664"/>
    </source>
</evidence>
<evidence type="ECO:0000250" key="3">
    <source>
        <dbReference type="UniProtKB" id="P27958"/>
    </source>
</evidence>
<evidence type="ECO:0000250" key="4">
    <source>
        <dbReference type="UniProtKB" id="P29846"/>
    </source>
</evidence>
<evidence type="ECO:0000250" key="5">
    <source>
        <dbReference type="UniProtKB" id="Q01403"/>
    </source>
</evidence>
<evidence type="ECO:0000250" key="6">
    <source>
        <dbReference type="UniProtKB" id="Q03463"/>
    </source>
</evidence>
<evidence type="ECO:0000250" key="7">
    <source>
        <dbReference type="UniProtKB" id="Q5EG65"/>
    </source>
</evidence>
<evidence type="ECO:0000250" key="8">
    <source>
        <dbReference type="UniProtKB" id="Q99IB8"/>
    </source>
</evidence>
<evidence type="ECO:0000255" key="9"/>
<evidence type="ECO:0000305" key="10"/>
<dbReference type="EMBL" id="X53135">
    <property type="protein sequence ID" value="CAA37295.1"/>
    <property type="molecule type" value="Genomic_RNA"/>
</dbReference>
<dbReference type="SMR" id="P27954"/>
<dbReference type="euHCVdb" id="X53135"/>
<dbReference type="GO" id="GO:0044167">
    <property type="term" value="C:host cell endoplasmic reticulum membrane"/>
    <property type="evidence" value="ECO:0007669"/>
    <property type="project" value="UniProtKB-SubCell"/>
</dbReference>
<dbReference type="GO" id="GO:0044186">
    <property type="term" value="C:host cell lipid droplet"/>
    <property type="evidence" value="ECO:0007669"/>
    <property type="project" value="UniProtKB-SubCell"/>
</dbReference>
<dbReference type="GO" id="GO:0044191">
    <property type="term" value="C:host cell mitochondrial membrane"/>
    <property type="evidence" value="ECO:0007669"/>
    <property type="project" value="UniProtKB-SubCell"/>
</dbReference>
<dbReference type="GO" id="GO:0042025">
    <property type="term" value="C:host cell nucleus"/>
    <property type="evidence" value="ECO:0007669"/>
    <property type="project" value="UniProtKB-SubCell"/>
</dbReference>
<dbReference type="GO" id="GO:0016020">
    <property type="term" value="C:membrane"/>
    <property type="evidence" value="ECO:0007669"/>
    <property type="project" value="UniProtKB-KW"/>
</dbReference>
<dbReference type="GO" id="GO:1990904">
    <property type="term" value="C:ribonucleoprotein complex"/>
    <property type="evidence" value="ECO:0007669"/>
    <property type="project" value="UniProtKB-KW"/>
</dbReference>
<dbReference type="GO" id="GO:0019031">
    <property type="term" value="C:viral envelope"/>
    <property type="evidence" value="ECO:0007669"/>
    <property type="project" value="UniProtKB-KW"/>
</dbReference>
<dbReference type="GO" id="GO:0019013">
    <property type="term" value="C:viral nucleocapsid"/>
    <property type="evidence" value="ECO:0007669"/>
    <property type="project" value="UniProtKB-KW"/>
</dbReference>
<dbReference type="GO" id="GO:0055036">
    <property type="term" value="C:virion membrane"/>
    <property type="evidence" value="ECO:0007669"/>
    <property type="project" value="UniProtKB-SubCell"/>
</dbReference>
<dbReference type="GO" id="GO:0003723">
    <property type="term" value="F:RNA binding"/>
    <property type="evidence" value="ECO:0007669"/>
    <property type="project" value="UniProtKB-KW"/>
</dbReference>
<dbReference type="GO" id="GO:0005198">
    <property type="term" value="F:structural molecule activity"/>
    <property type="evidence" value="ECO:0007669"/>
    <property type="project" value="InterPro"/>
</dbReference>
<dbReference type="GO" id="GO:0075512">
    <property type="term" value="P:clathrin-dependent endocytosis of virus by host cell"/>
    <property type="evidence" value="ECO:0007669"/>
    <property type="project" value="UniProtKB-KW"/>
</dbReference>
<dbReference type="GO" id="GO:0039654">
    <property type="term" value="P:fusion of virus membrane with host endosome membrane"/>
    <property type="evidence" value="ECO:0007669"/>
    <property type="project" value="UniProtKB-KW"/>
</dbReference>
<dbReference type="GO" id="GO:0052170">
    <property type="term" value="P:symbiont-mediated suppression of host innate immune response"/>
    <property type="evidence" value="ECO:0007669"/>
    <property type="project" value="UniProtKB-KW"/>
</dbReference>
<dbReference type="GO" id="GO:0019062">
    <property type="term" value="P:virion attachment to host cell"/>
    <property type="evidence" value="ECO:0007669"/>
    <property type="project" value="UniProtKB-KW"/>
</dbReference>
<dbReference type="FunFam" id="3.30.160.890:FF:000001">
    <property type="entry name" value="Genome polyprotein"/>
    <property type="match status" value="1"/>
</dbReference>
<dbReference type="Gene3D" id="3.30.160.890">
    <property type="entry name" value="Hepatitis C virus envelope glycoprotein E1, chain C"/>
    <property type="match status" value="1"/>
</dbReference>
<dbReference type="InterPro" id="IPR002521">
    <property type="entry name" value="HCV_Core_C"/>
</dbReference>
<dbReference type="InterPro" id="IPR002519">
    <property type="entry name" value="HCV_Env"/>
</dbReference>
<dbReference type="Pfam" id="PF01542">
    <property type="entry name" value="HCV_core"/>
    <property type="match status" value="1"/>
</dbReference>
<dbReference type="Pfam" id="PF01539">
    <property type="entry name" value="HCV_env"/>
    <property type="match status" value="1"/>
</dbReference>
<organism>
    <name type="scientific">Hepatitis C virus (isolate EC1)</name>
    <name type="common">HCV</name>
    <dbReference type="NCBI Taxonomy" id="11107"/>
    <lineage>
        <taxon>Viruses</taxon>
        <taxon>Riboviria</taxon>
        <taxon>Orthornavirae</taxon>
        <taxon>Kitrinoviricota</taxon>
        <taxon>Flasuviricetes</taxon>
        <taxon>Amarillovirales</taxon>
        <taxon>Flaviviridae</taxon>
        <taxon>Hepacivirus</taxon>
        <taxon>Hepacivirus hominis</taxon>
    </lineage>
</organism>
<reference key="1">
    <citation type="journal article" date="1991" name="Virology">
        <title>Variable and hypervariable domains are found in the regions of HCV corresponding to the flavivirus envelope and NS1 proteins and the pestivirus envelope glycoproteins.</title>
        <authorList>
            <person name="Weiner A.J."/>
            <person name="Brauer M.J."/>
            <person name="Rosenblatt J."/>
            <person name="Richman K.H."/>
            <person name="Tung J."/>
            <person name="Crawford K."/>
            <person name="Bonino F."/>
            <person name="Saracco G."/>
            <person name="Choo Q.-L."/>
            <person name="Houghton M."/>
            <person name="Han J.H."/>
        </authorList>
    </citation>
    <scope>NUCLEOTIDE SEQUENCE [GENOMIC RNA]</scope>
</reference>
<reference key="2">
    <citation type="journal article" date="2000" name="J. Viral Hepat.">
        <title>Properties of the hepatitis C virus core protein: a structural protein that modulates cellular processes.</title>
        <authorList>
            <person name="McLauchlan J."/>
        </authorList>
    </citation>
    <scope>REVIEW</scope>
</reference>
<reference key="3">
    <citation type="journal article" date="2004" name="Hepatology">
        <title>Structural biology of hepatitis C virus.</title>
        <authorList>
            <person name="Penin F."/>
            <person name="Dubuisson J."/>
            <person name="Rey F.A."/>
            <person name="Moradpour D."/>
            <person name="Pawlotsky J.-M."/>
        </authorList>
    </citation>
    <scope>REVIEW</scope>
</reference>
<organismHost>
    <name type="scientific">Homo sapiens</name>
    <name type="common">Human</name>
    <dbReference type="NCBI Taxonomy" id="9606"/>
</organismHost>
<feature type="chain" id="PRO_0000450899" description="Genome polyprotein">
    <location>
        <begin position="1" status="less than"/>
        <end position="192" status="greater than"/>
    </location>
</feature>
<feature type="chain" id="PRO_0000037555" description="Core protein precursor">
    <location>
        <begin position="1" status="less than"/>
        <end position="75"/>
    </location>
</feature>
<feature type="chain" id="PRO_0000037556" description="Mature core protein">
    <location>
        <begin position="1" status="less than"/>
        <end position="61"/>
    </location>
</feature>
<feature type="propeptide" id="PRO_0000037557" description="ER anchor for the core protein, removed in mature form by host signal peptidase">
    <location>
        <begin position="62"/>
        <end position="75"/>
    </location>
</feature>
<feature type="chain" id="PRO_0000037558" description="Envelope glycoprotein E1">
    <location>
        <begin position="76"/>
        <end position="192" status="greater than"/>
    </location>
</feature>
<feature type="topological domain" description="Cytoplasmic" evidence="3">
    <location>
        <begin position="1" status="less than"/>
        <end position="52"/>
    </location>
</feature>
<feature type="transmembrane region" description="Helical" evidence="3">
    <location>
        <begin position="53"/>
        <end position="73"/>
    </location>
</feature>
<feature type="topological domain" description="Lumenal" evidence="3">
    <location>
        <begin position="74"/>
        <end position="192" status="greater than"/>
    </location>
</feature>
<feature type="region of interest" description="Interaction with APOA2" evidence="4">
    <location>
        <begin position="6"/>
        <end position="57"/>
    </location>
</feature>
<feature type="region of interest" description="Important for lipid droplets localization" evidence="3">
    <location>
        <begin position="48"/>
        <end position="51"/>
    </location>
</feature>
<feature type="region of interest" description="Important for fusion" evidence="3">
    <location>
        <begin position="149"/>
        <end position="180"/>
    </location>
</feature>
<feature type="site" description="Cleavage; by host signal peptide peptidase" evidence="1">
    <location>
        <begin position="61"/>
        <end position="62"/>
    </location>
</feature>
<feature type="site" description="Cleavage; by host signal peptidase" evidence="1">
    <location>
        <begin position="75"/>
        <end position="76"/>
    </location>
</feature>
<feature type="glycosylation site" description="N-linked (GlcNAc...) asparagine; by host" evidence="3">
    <location>
        <position position="80"/>
    </location>
</feature>
<feature type="glycosylation site" description="N-linked (GlcNAc...) asparagine; by host" evidence="3">
    <location>
        <position position="93"/>
    </location>
</feature>
<feature type="glycosylation site" description="N-linked (GlcNAc...) asparagine; by host" evidence="3">
    <location>
        <position position="118"/>
    </location>
</feature>
<feature type="glycosylation site" description="N-linked (GlcNAc...) asparagine; by host" evidence="9">
    <location>
        <position position="189"/>
    </location>
</feature>
<feature type="non-terminal residue">
    <location>
        <position position="1"/>
    </location>
</feature>
<feature type="non-terminal residue">
    <location>
        <position position="192"/>
    </location>
</feature>
<protein>
    <recommendedName>
        <fullName>Genome polyprotein</fullName>
    </recommendedName>
    <component>
        <recommendedName>
            <fullName>Core protein precursor</fullName>
        </recommendedName>
        <alternativeName>
            <fullName>Capsid protein C</fullName>
        </alternativeName>
        <alternativeName>
            <fullName>p23</fullName>
        </alternativeName>
    </component>
    <component>
        <recommendedName>
            <fullName>Mature core protein</fullName>
        </recommendedName>
        <alternativeName>
            <fullName>p21</fullName>
        </alternativeName>
    </component>
    <component>
        <recommendedName>
            <fullName>Envelope glycoprotein E1</fullName>
        </recommendedName>
        <alternativeName>
            <fullName>gp32</fullName>
        </alternativeName>
        <alternativeName>
            <fullName>gp35</fullName>
        </alternativeName>
    </component>
</protein>
<name>POLG_HCVE1</name>
<sequence>RNLGKVIDTLTCGFADLMGYIPLVGAPLGGAARALAHGVRVLEDGVNYATGNLPGCSFSIFLLALLSCLTVPASAYQVRNSSGLYHVTNDCPNSSIVYEAADAILHTPGCVPCVHEGNVSRCWVAMTPTVATRDGKLPTTQLRRHIDLLVGSATLCSALYVGDLCGSVFLVGQLFTFSPRRHWTTQGCNCSI</sequence>
<comment type="function">
    <molecule>Mature core protein</molecule>
    <text evidence="1 2 3 4 8 10">Packages viral RNA to form a viral nucleocapsid, and promotes virion budding (Probable). Participates in the viral particle production as a result of its interaction with the non-structural protein 5A (By similarity). Binds RNA and may function as a RNA chaperone to induce the RNA structural rearrangements taking place during virus replication (By similarity). Modulates viral translation initiation by interacting with viral IRES and 40S ribosomal subunit (By similarity). Affects various cell signaling pathways, host immunity and lipid metabolism (Probable). Prevents the establishment of cellular antiviral state by blocking the interferon-alpha/beta (IFN-alpha/beta) and IFN-gamma signaling pathways and by blocking the formation of phosphorylated STAT1 and promoting ubiquitin-mediated proteasome-dependent degradation of STAT1 (By similarity). Activates STAT3 leading to cellular transformation (By similarity). Regulates the activity of cellular genes, including c-myc and c-fos (By similarity). May repress the promoter of p53, and sequester CREB3 and SP110 isoform 3/Sp110b in the cytoplasm (By similarity). Represses cell cycle negative regulating factor CDKN1A, thereby interrupting an important check point of normal cell cycle regulation (By similarity). Targets transcription factors involved in the regulation of inflammatory responses and in the immune response: suppresses TNF-induced NF-kappa-B activation, and activates AP-1 (By similarity). Binds to dendritic cells (DCs) via C1QR1, resulting in down-regulation of T-lymphocytes proliferation (By similarity). Alters lipid metabolism by interacting with hepatocellular proteins involved in lipid accumulation and storage (By similarity). Induces up-regulation of FAS promoter activity, and thereby contributes to the increased triglyceride accumulation in hepatocytes (steatosis) (By similarity).</text>
</comment>
<comment type="function">
    <molecule>Envelope glycoprotein E1</molecule>
    <text evidence="3">Forms a heterodimer with envelope glycoprotein E2, which mediates virus attachment to the host cell, virion internalization through clathrin-dependent endocytosis and fusion with host membrane (By similarity). Fusion with the host cell is most likely mediated by both E1 and E2, through conformational rearrangements of the heterodimer required for fusion rather than a classical class II fusion mechanism (By similarity). E1/E2 heterodimer binds host apolipoproteins such as APOB and ApoE thereby forming a lipo-viro-particle (LVP) (By similarity). APOE associated to the LVP allows the initial virus attachment to cell surface receptors such as the heparan sulfate proteoglycans (HSPGs), syndecan-1 (SDC1), syndecan-1 (SDC2), the low-density lipoprotein receptor (LDLR) and scavenger receptor class B type I (SCARB1) (By similarity). The cholesterol transfer activity of SCARB1 allows E2 exposure and binding of E2 to SCARB1 and the tetraspanin CD81 (By similarity). E1/E2 heterodimer binding on CD81 activates the epithelial growth factor receptor (EGFR) signaling pathway (By similarity). Diffusion of the complex E1-E2-EGFR-SCARB1-CD81 to the cell lateral membrane allows further interaction with Claudin 1 (CLDN1) and occludin (OCLN) to finally trigger HCV entry (By similarity).</text>
</comment>
<comment type="subunit">
    <molecule>Mature core protein</molecule>
    <text evidence="1 2 3 4 6 7 8">Homooligomer (By similarity). Interacts with E1 (via C-terminus) (By similarity). Interacts with the non-structural protein 5A (By similarity). Interacts (via N-terminus) with host STAT1 (via SH2 domain); this interaction results in decreased STAT1 phosphorylation and ubiquitin-mediated proteasome-dependent STAT1 degradation, leading to decreased IFN-stimulated gene transcription (By similarity). Interacts with host STAT3; this interaction constitutively activates STAT3 (By similarity). Interacts with host LTBR receptor (By similarity). Interacts with host TNFRSF1A receptor and possibly induces apoptosis (By similarity). Interacts with host HNRPK (By similarity). Interacts with host YWHAE (By similarity). Interacts with host UBE3A/E6AP (By similarity). Interacts with host DDX3X (By similarity). Interacts with host APOA2 (By similarity). Interacts with host RXRA protein (By similarity). Interacts with host SP110 isoform 3/Sp110b; this interaction sequesters the transcriptional corepressor SP110 away from the nucleus (By similarity). Interacts with host CREB3 nuclear transcription protein; this interaction triggers cell transformation (By similarity). Interacts with host ACY3 (By similarity). Interacts with host C1QR1 (By similarity). Interacts with host RBM24; this interaction, which enhances the interaction of the mature core protein with 5'-UTR, may inhibit viral translation and favor replication (By similarity). Interacts with host EIF2AK2/PKR; this interaction induces the autophosphorylation of EIF2AK2 (By similarity). Part of the viral assembly initiation complex composed of NS2, E1, E2, NS3, NS4A, NS5A and the mature core protein (By similarity).</text>
</comment>
<comment type="subunit">
    <molecule>Envelope glycoprotein E1</molecule>
    <text evidence="3 8">Forms a heterodimer with envelope glycoprotein E2 (By similarity). Interacts with mature core protein (By similarity). Interacts with protease NS2 (By similarity). The heterodimer E1/E2 interacts with host CLDN1; this interaction plays a role in viral entry into host cell (By similarity). Interacts with host SPSB2 (via C-terminus) (By similarity). Part of the viral assembly initiation complex composed of NS2, E1, E2, NS3, NS4A, NS5A and the mature core protein (By similarity).</text>
</comment>
<comment type="subcellular location">
    <molecule>Core protein precursor</molecule>
    <subcellularLocation>
        <location evidence="2">Host endoplasmic reticulum membrane</location>
        <topology evidence="9">Single-pass membrane protein</topology>
    </subcellularLocation>
    <subcellularLocation>
        <location evidence="2">Host mitochondrion membrane</location>
        <topology evidence="9">Single-pass type I membrane protein</topology>
    </subcellularLocation>
    <text>The C-terminal transmembrane domain of the core protein precursor contains an ER signal leading the nascent polyprotein to the ER membrane.</text>
</comment>
<comment type="subcellular location">
    <molecule>Mature core protein</molecule>
    <subcellularLocation>
        <location evidence="8">Virion</location>
    </subcellularLocation>
    <subcellularLocation>
        <location evidence="8">Host cytoplasm</location>
    </subcellularLocation>
    <subcellularLocation>
        <location evidence="5">Host nucleus</location>
    </subcellularLocation>
    <subcellularLocation>
        <location evidence="8">Host lipid droplet</location>
    </subcellularLocation>
    <text evidence="3">Only a minor proportion of core protein is present in the nucleus (By similarity). Probably present on the surface of lipid droplets (By similarity).</text>
</comment>
<comment type="subcellular location">
    <molecule>Envelope glycoprotein E1</molecule>
    <subcellularLocation>
        <location evidence="10">Virion membrane</location>
        <topology evidence="10">Single-pass type I membrane protein</topology>
    </subcellularLocation>
    <subcellularLocation>
        <location>Host endoplasmic reticulum membrane</location>
        <topology evidence="3">Single-pass type I membrane protein</topology>
    </subcellularLocation>
    <text evidence="3">The C-terminal transmembrane domain acts as a signal sequence and forms a hairpin structure before cleavage by host signal peptidase (By similarity). After cleavage, the membrane sequence is retained at the C-terminus of the protein, serving as ER membrane anchor (By similarity). A reorientation of the second hydrophobic stretch occurs after cleavage producing a single reoriented transmembrane domain (By similarity). These events explain the final topology of the protein (By similarity).</text>
</comment>
<comment type="domain">
    <molecule>Envelope glycoprotein E1</molecule>
    <text evidence="3">The transmembrane regions of envelope E1 and E2 glycoproteins are involved in heterodimer formation, ER localization, and assembly of these proteins.</text>
</comment>
<comment type="PTM">
    <molecule>Genome polyprotein</molecule>
    <text evidence="2 3">Specific enzymatic cleavages in vivo yield mature proteins (By similarity). The structural proteins, core, E1, E2 and p7 are produced by proteolytic processing by host signal peptidases (By similarity). The core protein precursor is synthesized as a 23 kDa, which is retained in the ER membrane through the hydrophobic signal peptide (By similarity). Cleavage by the signal peptidase releases the 21 kDa mature core protein (By similarity). The cleavage of the core protein precursor occurs between aminoacids 176 and 188 but the exact cleavage site is not known (By similarity). Some degraded forms of the core protein appear as well during the course of infection (By similarity). The other proteins (p7, NS2, NS3, NS4A, NS4B, NS5A and NS5B) are cleaved by the viral proteases (By similarity). Autoprocessing between NS2 and NS3 is mediated by the NS2 cysteine protease catalytic domain and regulated by the NS3 N-terminal domain (By similarity).</text>
</comment>
<comment type="PTM">
    <molecule>Mature core protein</molecule>
    <text evidence="5">Phosphorylated by host PKC and PKA.</text>
</comment>
<comment type="PTM">
    <molecule>Mature core protein</molecule>
    <text evidence="6">Ubiquitinated; mediated by UBE3A and leading to core protein subsequent proteasomal degradation.</text>
</comment>
<comment type="PTM">
    <molecule>Envelope glycoprotein E1</molecule>
    <text evidence="3">Highly N-glycosylated.</text>
</comment>
<comment type="miscellaneous">
    <text evidence="10">Viral particle assembly takes place at the surface of ER-derived membranes in close proximity to lipid droplets. NS2 associates with E1/E2 glycoproteins, NS3 and NS5A, which interacts with the viral RNA and core protein to promote genome encapsidation. The nucleocapsid buds at the ER membrane where E1/E2 glycoproteins are anchored and afterward associate with nascent lipid droplet to acquire APOE and APOC. Secretion of viral particles is probably regulated by viroporin p7.</text>
</comment>
<comment type="miscellaneous">
    <molecule>Mature core protein</molecule>
    <text evidence="1">Exerts viral interference on hepatitis B virus when HCV and HBV coinfect the same cell, by suppressing HBV gene expression, RNA encapsidation and budding.</text>
</comment>
<comment type="similarity">
    <text evidence="10">Belongs to the hepacivirus polyprotein family.</text>
</comment>
<comment type="caution">
    <text evidence="10">The core gene probably also codes for alternative reading frame proteins (ARFPs). Many functions depicted for the core protein might belong to the ARFPs.</text>
</comment>
<accession>P27954</accession>
<proteinExistence type="inferred from homology"/>